<evidence type="ECO:0000250" key="1"/>
<evidence type="ECO:0000255" key="2"/>
<evidence type="ECO:0000256" key="3">
    <source>
        <dbReference type="SAM" id="MobiDB-lite"/>
    </source>
</evidence>
<evidence type="ECO:0000305" key="4"/>
<gene>
    <name type="primary">schC</name>
</gene>
<proteinExistence type="inferred from homology"/>
<organism>
    <name type="scientific">Streptomyces halstedii</name>
    <dbReference type="NCBI Taxonomy" id="1944"/>
    <lineage>
        <taxon>Bacteria</taxon>
        <taxon>Bacillati</taxon>
        <taxon>Actinomycetota</taxon>
        <taxon>Actinomycetes</taxon>
        <taxon>Kitasatosporales</taxon>
        <taxon>Streptomycetaceae</taxon>
        <taxon>Streptomyces</taxon>
    </lineage>
</organism>
<feature type="chain" id="PRO_0000214042" description="Putative polyketide hydroxylase">
    <location>
        <begin position="1"/>
        <end position="555"/>
    </location>
</feature>
<feature type="region of interest" description="Disordered" evidence="3">
    <location>
        <begin position="366"/>
        <end position="395"/>
    </location>
</feature>
<feature type="binding site" evidence="2">
    <location>
        <begin position="16"/>
        <end position="45"/>
    </location>
    <ligand>
        <name>FAD</name>
        <dbReference type="ChEBI" id="CHEBI:57692"/>
    </ligand>
</feature>
<feature type="binding site" evidence="2">
    <location>
        <begin position="303"/>
        <end position="313"/>
    </location>
    <ligand>
        <name>FAD</name>
        <dbReference type="ChEBI" id="CHEBI:57692"/>
    </ligand>
</feature>
<reference key="1">
    <citation type="journal article" date="1993" name="J. Bacteriol.">
        <title>A hydroxylase-like gene product contributes to synthesis of a polyketide spore pigment in Streptomyces halstedii.</title>
        <authorList>
            <person name="Blanco G."/>
            <person name="Pereda A."/>
            <person name="Brian P."/>
            <person name="Mendez C."/>
            <person name="Chater K.F."/>
            <person name="Salas J.A."/>
        </authorList>
    </citation>
    <scope>NUCLEOTIDE SEQUENCE [GENOMIC DNA]</scope>
    <source>
        <strain>NRRL 2381</strain>
    </source>
</reference>
<reference key="2">
    <citation type="journal article" date="1993" name="Gene">
        <title>Hybridization and DNA sequence analyses suggest an early evolutionary divergence of related biosynthetic gene sets encoding polyketide antibiotics and spore pigments in Streptomyces spp.</title>
        <authorList>
            <person name="Blanco G."/>
            <person name="Brian P."/>
            <person name="Pereda A."/>
            <person name="Mendez C."/>
            <person name="Salas J.A."/>
            <person name="Chater K.F."/>
        </authorList>
    </citation>
    <scope>NUCLEOTIDE SEQUENCE [GENOMIC DNA] OF 1-75</scope>
    <source>
        <strain>NRRL 2381</strain>
    </source>
</reference>
<comment type="function">
    <text>Involved in developmentally regulated synthesis of a compound biosynthetically related to polyketide antibiotics which is essential for spore color in Streptomyces halstedii.</text>
</comment>
<comment type="cofactor">
    <cofactor evidence="1">
        <name>FAD</name>
        <dbReference type="ChEBI" id="CHEBI:57692"/>
    </cofactor>
</comment>
<comment type="similarity">
    <text evidence="4">Belongs to the PheA/TfdB FAD monooxygenase family.</text>
</comment>
<dbReference type="EC" id="1.14.13.-"/>
<dbReference type="EMBL" id="L05390">
    <property type="protein sequence ID" value="AAA02830.2"/>
    <property type="molecule type" value="Genomic_DNA"/>
</dbReference>
<dbReference type="PIR" id="B49918">
    <property type="entry name" value="B49918"/>
</dbReference>
<dbReference type="SMR" id="Q05355"/>
<dbReference type="GO" id="GO:0071949">
    <property type="term" value="F:FAD binding"/>
    <property type="evidence" value="ECO:0007669"/>
    <property type="project" value="InterPro"/>
</dbReference>
<dbReference type="GO" id="GO:0016709">
    <property type="term" value="F:oxidoreductase activity, acting on paired donors, with incorporation or reduction of molecular oxygen, NAD(P)H as one donor, and incorporation of one atom of oxygen"/>
    <property type="evidence" value="ECO:0007669"/>
    <property type="project" value="UniProtKB-ARBA"/>
</dbReference>
<dbReference type="Gene3D" id="3.40.30.120">
    <property type="match status" value="1"/>
</dbReference>
<dbReference type="Gene3D" id="3.30.9.10">
    <property type="entry name" value="D-Amino Acid Oxidase, subunit A, domain 2"/>
    <property type="match status" value="1"/>
</dbReference>
<dbReference type="Gene3D" id="3.50.50.60">
    <property type="entry name" value="FAD/NAD(P)-binding domain"/>
    <property type="match status" value="1"/>
</dbReference>
<dbReference type="InterPro" id="IPR002938">
    <property type="entry name" value="FAD-bd"/>
</dbReference>
<dbReference type="InterPro" id="IPR036188">
    <property type="entry name" value="FAD/NAD-bd_sf"/>
</dbReference>
<dbReference type="InterPro" id="IPR050641">
    <property type="entry name" value="RIFMO-like"/>
</dbReference>
<dbReference type="PANTHER" id="PTHR43004:SF19">
    <property type="entry name" value="BINDING MONOOXYGENASE, PUTATIVE (JCVI)-RELATED"/>
    <property type="match status" value="1"/>
</dbReference>
<dbReference type="PANTHER" id="PTHR43004">
    <property type="entry name" value="TRK SYSTEM POTASSIUM UPTAKE PROTEIN"/>
    <property type="match status" value="1"/>
</dbReference>
<dbReference type="Pfam" id="PF01494">
    <property type="entry name" value="FAD_binding_3"/>
    <property type="match status" value="1"/>
</dbReference>
<dbReference type="Pfam" id="PF21274">
    <property type="entry name" value="Rng_hyd_C"/>
    <property type="match status" value="1"/>
</dbReference>
<dbReference type="PRINTS" id="PR00420">
    <property type="entry name" value="RNGMNOXGNASE"/>
</dbReference>
<dbReference type="SUPFAM" id="SSF51905">
    <property type="entry name" value="FAD/NAD(P)-binding domain"/>
    <property type="match status" value="1"/>
</dbReference>
<keyword id="KW-0274">FAD</keyword>
<keyword id="KW-0285">Flavoprotein</keyword>
<keyword id="KW-0560">Oxidoreductase</keyword>
<sequence>MNARADRAGDTVHRVPVLVVGGSLVGLSTSVFLGRLGVRHMLVERHAGTSVHPRGRGNNVRTMEVYRAAGVEQGIRRAAATLAGNHGILQTPSLVGDEGEWLLRDIDPGGGLARFSPSSWCLCSQNDLEPVLLDHAVELGGEIRFSTELQSFEQDPAGVTAVIKSRRSGEHTTVRADYLVAADGPRSPVREQLGIGQSGPGDLFHNVSVTFRSRRLAEFVGDRHFIVCYLTNPEADGALLPVDNRENWVFHAPWYPRAARPLEDFTDERCADHIRRAVGVPDLDVEITGKAPWHAAQRVARQYRAGRVFLAGDSAHEMSPTGAFGSNTGIQDAHNLAWKLAAVLGGWAGDGLLDTYDAERRPVAEATTARAAARSAEHSHPGFAPPPGTSGGPQGGILNVALGYRYPGGAVLGADPATPVVPEALTLAGEPGSRAPHLWMSRRGERLSTLDLYERSPVLLSDADAGAPDAWHESAVRLAEELSVPLTSYRVGRSAGADLTPEDDVNWTARHGTPPGGAVLVRPDGFVAWRSQEPVPAEETEPTLRHVLTTVLSLG</sequence>
<accession>Q05355</accession>
<protein>
    <recommendedName>
        <fullName>Putative polyketide hydroxylase</fullName>
        <ecNumber>1.14.13.-</ecNumber>
    </recommendedName>
</protein>
<name>HYDL_STRHA</name>